<proteinExistence type="inferred from homology"/>
<gene>
    <name evidence="1" type="primary">rnc</name>
    <name type="ordered locus">Sfum_0876</name>
</gene>
<name>RNC_SYNFM</name>
<organism>
    <name type="scientific">Syntrophobacter fumaroxidans (strain DSM 10017 / MPOB)</name>
    <dbReference type="NCBI Taxonomy" id="335543"/>
    <lineage>
        <taxon>Bacteria</taxon>
        <taxon>Pseudomonadati</taxon>
        <taxon>Thermodesulfobacteriota</taxon>
        <taxon>Syntrophobacteria</taxon>
        <taxon>Syntrophobacterales</taxon>
        <taxon>Syntrophobacteraceae</taxon>
        <taxon>Syntrophobacter</taxon>
    </lineage>
</organism>
<accession>A0LGM1</accession>
<reference key="1">
    <citation type="submission" date="2006-10" db="EMBL/GenBank/DDBJ databases">
        <title>Complete sequence of Syntrophobacter fumaroxidans MPOB.</title>
        <authorList>
            <consortium name="US DOE Joint Genome Institute"/>
            <person name="Copeland A."/>
            <person name="Lucas S."/>
            <person name="Lapidus A."/>
            <person name="Barry K."/>
            <person name="Detter J.C."/>
            <person name="Glavina del Rio T."/>
            <person name="Hammon N."/>
            <person name="Israni S."/>
            <person name="Pitluck S."/>
            <person name="Goltsman E.G."/>
            <person name="Martinez M."/>
            <person name="Schmutz J."/>
            <person name="Larimer F."/>
            <person name="Land M."/>
            <person name="Hauser L."/>
            <person name="Kyrpides N."/>
            <person name="Kim E."/>
            <person name="Boone D.R."/>
            <person name="Brockman F."/>
            <person name="Culley D."/>
            <person name="Ferry J."/>
            <person name="Gunsalus R."/>
            <person name="McInerney M.J."/>
            <person name="Morrison M."/>
            <person name="Plugge C."/>
            <person name="Rohlin L."/>
            <person name="Scholten J."/>
            <person name="Sieber J."/>
            <person name="Stams A.J.M."/>
            <person name="Worm P."/>
            <person name="Henstra A.M."/>
            <person name="Richardson P."/>
        </authorList>
    </citation>
    <scope>NUCLEOTIDE SEQUENCE [LARGE SCALE GENOMIC DNA]</scope>
    <source>
        <strain>DSM 10017 / MPOB</strain>
    </source>
</reference>
<feature type="chain" id="PRO_1000075843" description="Ribonuclease 3">
    <location>
        <begin position="1"/>
        <end position="242"/>
    </location>
</feature>
<feature type="domain" description="RNase III" evidence="1">
    <location>
        <begin position="7"/>
        <end position="136"/>
    </location>
</feature>
<feature type="domain" description="DRBM" evidence="1">
    <location>
        <begin position="167"/>
        <end position="236"/>
    </location>
</feature>
<feature type="active site" evidence="1">
    <location>
        <position position="53"/>
    </location>
</feature>
<feature type="active site" evidence="1">
    <location>
        <position position="125"/>
    </location>
</feature>
<feature type="binding site" evidence="1">
    <location>
        <position position="49"/>
    </location>
    <ligand>
        <name>Mg(2+)</name>
        <dbReference type="ChEBI" id="CHEBI:18420"/>
    </ligand>
</feature>
<feature type="binding site" evidence="1">
    <location>
        <position position="122"/>
    </location>
    <ligand>
        <name>Mg(2+)</name>
        <dbReference type="ChEBI" id="CHEBI:18420"/>
    </ligand>
</feature>
<feature type="binding site" evidence="1">
    <location>
        <position position="125"/>
    </location>
    <ligand>
        <name>Mg(2+)</name>
        <dbReference type="ChEBI" id="CHEBI:18420"/>
    </ligand>
</feature>
<protein>
    <recommendedName>
        <fullName evidence="1">Ribonuclease 3</fullName>
        <ecNumber evidence="1">3.1.26.3</ecNumber>
    </recommendedName>
    <alternativeName>
        <fullName evidence="1">Ribonuclease III</fullName>
        <shortName evidence="1">RNase III</shortName>
    </alternativeName>
</protein>
<comment type="function">
    <text evidence="1">Digests double-stranded RNA. Involved in the processing of primary rRNA transcript to yield the immediate precursors to the large and small rRNAs (23S and 16S). Processes some mRNAs, and tRNAs when they are encoded in the rRNA operon. Processes pre-crRNA and tracrRNA of type II CRISPR loci if present in the organism.</text>
</comment>
<comment type="catalytic activity">
    <reaction evidence="1">
        <text>Endonucleolytic cleavage to 5'-phosphomonoester.</text>
        <dbReference type="EC" id="3.1.26.3"/>
    </reaction>
</comment>
<comment type="cofactor">
    <cofactor evidence="1">
        <name>Mg(2+)</name>
        <dbReference type="ChEBI" id="CHEBI:18420"/>
    </cofactor>
</comment>
<comment type="subunit">
    <text evidence="1">Homodimer.</text>
</comment>
<comment type="subcellular location">
    <subcellularLocation>
        <location evidence="1">Cytoplasm</location>
    </subcellularLocation>
</comment>
<comment type="similarity">
    <text evidence="1">Belongs to the ribonuclease III family.</text>
</comment>
<dbReference type="EC" id="3.1.26.3" evidence="1"/>
<dbReference type="EMBL" id="CP000478">
    <property type="protein sequence ID" value="ABK16573.1"/>
    <property type="molecule type" value="Genomic_DNA"/>
</dbReference>
<dbReference type="RefSeq" id="WP_011697744.1">
    <property type="nucleotide sequence ID" value="NC_008554.1"/>
</dbReference>
<dbReference type="SMR" id="A0LGM1"/>
<dbReference type="FunCoup" id="A0LGM1">
    <property type="interactions" value="456"/>
</dbReference>
<dbReference type="STRING" id="335543.Sfum_0876"/>
<dbReference type="KEGG" id="sfu:Sfum_0876"/>
<dbReference type="eggNOG" id="COG0571">
    <property type="taxonomic scope" value="Bacteria"/>
</dbReference>
<dbReference type="HOGENOM" id="CLU_000907_1_3_7"/>
<dbReference type="InParanoid" id="A0LGM1"/>
<dbReference type="OrthoDB" id="9805026at2"/>
<dbReference type="Proteomes" id="UP000001784">
    <property type="component" value="Chromosome"/>
</dbReference>
<dbReference type="GO" id="GO:0005737">
    <property type="term" value="C:cytoplasm"/>
    <property type="evidence" value="ECO:0007669"/>
    <property type="project" value="UniProtKB-SubCell"/>
</dbReference>
<dbReference type="GO" id="GO:0003725">
    <property type="term" value="F:double-stranded RNA binding"/>
    <property type="evidence" value="ECO:0007669"/>
    <property type="project" value="TreeGrafter"/>
</dbReference>
<dbReference type="GO" id="GO:0046872">
    <property type="term" value="F:metal ion binding"/>
    <property type="evidence" value="ECO:0007669"/>
    <property type="project" value="UniProtKB-KW"/>
</dbReference>
<dbReference type="GO" id="GO:0004525">
    <property type="term" value="F:ribonuclease III activity"/>
    <property type="evidence" value="ECO:0007669"/>
    <property type="project" value="UniProtKB-UniRule"/>
</dbReference>
<dbReference type="GO" id="GO:0019843">
    <property type="term" value="F:rRNA binding"/>
    <property type="evidence" value="ECO:0007669"/>
    <property type="project" value="UniProtKB-KW"/>
</dbReference>
<dbReference type="GO" id="GO:0006397">
    <property type="term" value="P:mRNA processing"/>
    <property type="evidence" value="ECO:0007669"/>
    <property type="project" value="UniProtKB-UniRule"/>
</dbReference>
<dbReference type="GO" id="GO:0010468">
    <property type="term" value="P:regulation of gene expression"/>
    <property type="evidence" value="ECO:0007669"/>
    <property type="project" value="TreeGrafter"/>
</dbReference>
<dbReference type="GO" id="GO:0006364">
    <property type="term" value="P:rRNA processing"/>
    <property type="evidence" value="ECO:0007669"/>
    <property type="project" value="UniProtKB-UniRule"/>
</dbReference>
<dbReference type="GO" id="GO:0008033">
    <property type="term" value="P:tRNA processing"/>
    <property type="evidence" value="ECO:0007669"/>
    <property type="project" value="UniProtKB-KW"/>
</dbReference>
<dbReference type="CDD" id="cd10845">
    <property type="entry name" value="DSRM_RNAse_III_family"/>
    <property type="match status" value="1"/>
</dbReference>
<dbReference type="CDD" id="cd00593">
    <property type="entry name" value="RIBOc"/>
    <property type="match status" value="1"/>
</dbReference>
<dbReference type="FunFam" id="1.10.1520.10:FF:000001">
    <property type="entry name" value="Ribonuclease 3"/>
    <property type="match status" value="1"/>
</dbReference>
<dbReference type="FunFam" id="3.30.160.20:FF:000003">
    <property type="entry name" value="Ribonuclease 3"/>
    <property type="match status" value="1"/>
</dbReference>
<dbReference type="Gene3D" id="3.30.160.20">
    <property type="match status" value="1"/>
</dbReference>
<dbReference type="Gene3D" id="1.10.1520.10">
    <property type="entry name" value="Ribonuclease III domain"/>
    <property type="match status" value="1"/>
</dbReference>
<dbReference type="HAMAP" id="MF_00104">
    <property type="entry name" value="RNase_III"/>
    <property type="match status" value="1"/>
</dbReference>
<dbReference type="InterPro" id="IPR014720">
    <property type="entry name" value="dsRBD_dom"/>
</dbReference>
<dbReference type="InterPro" id="IPR011907">
    <property type="entry name" value="RNase_III"/>
</dbReference>
<dbReference type="InterPro" id="IPR000999">
    <property type="entry name" value="RNase_III_dom"/>
</dbReference>
<dbReference type="InterPro" id="IPR036389">
    <property type="entry name" value="RNase_III_sf"/>
</dbReference>
<dbReference type="NCBIfam" id="TIGR02191">
    <property type="entry name" value="RNaseIII"/>
    <property type="match status" value="1"/>
</dbReference>
<dbReference type="PANTHER" id="PTHR11207:SF0">
    <property type="entry name" value="RIBONUCLEASE 3"/>
    <property type="match status" value="1"/>
</dbReference>
<dbReference type="PANTHER" id="PTHR11207">
    <property type="entry name" value="RIBONUCLEASE III"/>
    <property type="match status" value="1"/>
</dbReference>
<dbReference type="Pfam" id="PF00035">
    <property type="entry name" value="dsrm"/>
    <property type="match status" value="1"/>
</dbReference>
<dbReference type="Pfam" id="PF14622">
    <property type="entry name" value="Ribonucleas_3_3"/>
    <property type="match status" value="1"/>
</dbReference>
<dbReference type="SMART" id="SM00358">
    <property type="entry name" value="DSRM"/>
    <property type="match status" value="1"/>
</dbReference>
<dbReference type="SMART" id="SM00535">
    <property type="entry name" value="RIBOc"/>
    <property type="match status" value="1"/>
</dbReference>
<dbReference type="SUPFAM" id="SSF54768">
    <property type="entry name" value="dsRNA-binding domain-like"/>
    <property type="match status" value="1"/>
</dbReference>
<dbReference type="SUPFAM" id="SSF69065">
    <property type="entry name" value="RNase III domain-like"/>
    <property type="match status" value="1"/>
</dbReference>
<dbReference type="PROSITE" id="PS50137">
    <property type="entry name" value="DS_RBD"/>
    <property type="match status" value="1"/>
</dbReference>
<dbReference type="PROSITE" id="PS00517">
    <property type="entry name" value="RNASE_3_1"/>
    <property type="match status" value="1"/>
</dbReference>
<dbReference type="PROSITE" id="PS50142">
    <property type="entry name" value="RNASE_3_2"/>
    <property type="match status" value="1"/>
</dbReference>
<sequence length="242" mass="27087">MKPSDGLEALQNLLGYRFGDEGLLHRALVHRSYLHENPHLDEKDNETLEFLGDAVLGLAISHFLLEQFPDYNEGELSRLRSAIVNERELTRIAVELNLGEYLLLGKGEEMTGGRRKASLLADSLEALLASIYLDGGLDAVLGVIKKLFDVYLRFEKREHVLKALDKDYKTQLQELTQARYKLTPVYVLDREEGPDHDKTFHMNVVLEGQVLAGGSGKSKKDAQQAAAEKALQIIAADSWSLD</sequence>
<evidence type="ECO:0000255" key="1">
    <source>
        <dbReference type="HAMAP-Rule" id="MF_00104"/>
    </source>
</evidence>
<keyword id="KW-0963">Cytoplasm</keyword>
<keyword id="KW-0255">Endonuclease</keyword>
<keyword id="KW-0378">Hydrolase</keyword>
<keyword id="KW-0460">Magnesium</keyword>
<keyword id="KW-0479">Metal-binding</keyword>
<keyword id="KW-0507">mRNA processing</keyword>
<keyword id="KW-0540">Nuclease</keyword>
<keyword id="KW-1185">Reference proteome</keyword>
<keyword id="KW-0694">RNA-binding</keyword>
<keyword id="KW-0698">rRNA processing</keyword>
<keyword id="KW-0699">rRNA-binding</keyword>
<keyword id="KW-0819">tRNA processing</keyword>